<feature type="signal peptide" evidence="1">
    <location>
        <begin position="1"/>
        <end position="24"/>
    </location>
</feature>
<feature type="peptide" id="PRO_0000006965" description="Lingual antimicrobial peptide">
    <location>
        <begin position="25"/>
        <end position="64"/>
    </location>
</feature>
<feature type="disulfide bond" evidence="2">
    <location>
        <begin position="31"/>
        <end position="60"/>
    </location>
</feature>
<feature type="disulfide bond" evidence="2">
    <location>
        <begin position="38"/>
        <end position="53"/>
    </location>
</feature>
<feature type="disulfide bond" evidence="2">
    <location>
        <begin position="43"/>
        <end position="61"/>
    </location>
</feature>
<feature type="sequence conflict" description="In Ref. 3; AAB05401." evidence="4" ref="3">
    <original>G</original>
    <variation>R</variation>
    <location>
        <position position="20"/>
    </location>
</feature>
<comment type="function">
    <text evidence="3">Shows a broad spectrum of antibacterial and antifungal activities.</text>
</comment>
<comment type="subcellular location">
    <subcellularLocation>
        <location>Secreted</location>
    </subcellularLocation>
</comment>
<comment type="tissue specificity">
    <text evidence="3">In many of the exposed epithelial surfaces including conjunctivae, bronchi, colon, urinary tract and trachea.</text>
</comment>
<comment type="developmental stage">
    <text>Not found in fetus.</text>
</comment>
<comment type="similarity">
    <text evidence="4">Belongs to the beta-defensin family. LAP/TAP subfamily.</text>
</comment>
<reference key="1">
    <citation type="journal article" date="1995" name="Science">
        <title>Epithelial antibiotics induced at sites of inflammation.</title>
        <authorList>
            <person name="Schonwetter B.S."/>
            <person name="Stolzenberg E.D."/>
            <person name="Zasloff M.A."/>
        </authorList>
    </citation>
    <scope>NUCLEOTIDE SEQUENCE [MRNA]</scope>
    <scope>PARTIAL PROTEIN SEQUENCE</scope>
    <scope>FUNCTION</scope>
    <scope>TISSUE SPECIFICITY</scope>
    <source>
        <tissue>Tongue epithelium</tissue>
    </source>
</reference>
<reference key="2">
    <citation type="submission" date="2005-01" db="EMBL/GenBank/DDBJ databases">
        <title>Analysis of sequences obtained from constructed full-length bovine cDNA libraries.</title>
        <authorList>
            <person name="Yu J."/>
            <person name="Meng Y."/>
            <person name="Wang Z."/>
            <person name="Hansen C."/>
            <person name="Li C."/>
            <person name="Moore S.S."/>
        </authorList>
    </citation>
    <scope>NUCLEOTIDE SEQUENCE [LARGE SCALE MRNA]</scope>
    <source>
        <tissue>Lymphoid epithelium</tissue>
    </source>
</reference>
<reference key="3">
    <citation type="journal article" date="1996" name="Infect. Immun.">
        <title>Coordinate induction of two antibiotic genes in tracheal epithelial cells exposed to the inflammatory mediators lipopolysaccharide and tumor necrosis factor alpha.</title>
        <authorList>
            <person name="Russell J.P."/>
            <person name="Diamond G."/>
            <person name="Tarver A.P."/>
            <person name="Scanlin T.F."/>
            <person name="Bevins C.L."/>
        </authorList>
    </citation>
    <scope>NUCLEOTIDE SEQUENCE [MRNA] OF 3-64</scope>
</reference>
<organism>
    <name type="scientific">Bos taurus</name>
    <name type="common">Bovine</name>
    <dbReference type="NCBI Taxonomy" id="9913"/>
    <lineage>
        <taxon>Eukaryota</taxon>
        <taxon>Metazoa</taxon>
        <taxon>Chordata</taxon>
        <taxon>Craniata</taxon>
        <taxon>Vertebrata</taxon>
        <taxon>Euteleostomi</taxon>
        <taxon>Mammalia</taxon>
        <taxon>Eutheria</taxon>
        <taxon>Laurasiatheria</taxon>
        <taxon>Artiodactyla</taxon>
        <taxon>Ruminantia</taxon>
        <taxon>Pecora</taxon>
        <taxon>Bovidae</taxon>
        <taxon>Bovinae</taxon>
        <taxon>Bos</taxon>
    </lineage>
</organism>
<gene>
    <name type="primary">LAP</name>
</gene>
<keyword id="KW-0044">Antibiotic</keyword>
<keyword id="KW-0929">Antimicrobial</keyword>
<keyword id="KW-0211">Defensin</keyword>
<keyword id="KW-0903">Direct protein sequencing</keyword>
<keyword id="KW-1015">Disulfide bond</keyword>
<keyword id="KW-0295">Fungicide</keyword>
<keyword id="KW-1185">Reference proteome</keyword>
<keyword id="KW-0964">Secreted</keyword>
<keyword id="KW-0732">Signal</keyword>
<evidence type="ECO:0000250" key="1">
    <source>
        <dbReference type="UniProtKB" id="A3RJ36"/>
    </source>
</evidence>
<evidence type="ECO:0000250" key="2">
    <source>
        <dbReference type="UniProtKB" id="P46171"/>
    </source>
</evidence>
<evidence type="ECO:0000269" key="3">
    <source>
    </source>
</evidence>
<evidence type="ECO:0000305" key="4"/>
<protein>
    <recommendedName>
        <fullName>Lingual antimicrobial peptide</fullName>
    </recommendedName>
</protein>
<accession>Q28880</accession>
<accession>Q28202</accession>
<accession>Q56JV8</accession>
<sequence length="64" mass="7041">MRLHHLLLALLFLVLSAGSGFTQGVRNSQSCRRNKGICVPIRCPGSMRQIGTCLGAQVKCCRRK</sequence>
<proteinExistence type="evidence at protein level"/>
<dbReference type="EMBL" id="S76279">
    <property type="protein sequence ID" value="AAB33727.1"/>
    <property type="molecule type" value="mRNA"/>
</dbReference>
<dbReference type="EMBL" id="AY911374">
    <property type="protein sequence ID" value="AAW82137.1"/>
    <property type="molecule type" value="mRNA"/>
</dbReference>
<dbReference type="EMBL" id="U48357">
    <property type="protein sequence ID" value="AAB05401.1"/>
    <property type="molecule type" value="mRNA"/>
</dbReference>
<dbReference type="PIR" id="A56128">
    <property type="entry name" value="A56128"/>
</dbReference>
<dbReference type="RefSeq" id="NP_982259.3">
    <property type="nucleotide sequence ID" value="NM_203435.4"/>
</dbReference>
<dbReference type="SMR" id="Q28880"/>
<dbReference type="FunCoup" id="Q28880">
    <property type="interactions" value="213"/>
</dbReference>
<dbReference type="STRING" id="9913.ENSBTAP00000046999"/>
<dbReference type="PaxDb" id="9913-ENSBTAP00000019635"/>
<dbReference type="GeneID" id="403090"/>
<dbReference type="KEGG" id="bta:403090"/>
<dbReference type="CTD" id="7939"/>
<dbReference type="VEuPathDB" id="HostDB:ENSBTAG00000053889"/>
<dbReference type="eggNOG" id="ENOG502SYUI">
    <property type="taxonomic scope" value="Eukaryota"/>
</dbReference>
<dbReference type="HOGENOM" id="CLU_189296_4_1_1"/>
<dbReference type="InParanoid" id="Q28880"/>
<dbReference type="OrthoDB" id="9714396at2759"/>
<dbReference type="Proteomes" id="UP000009136">
    <property type="component" value="Chromosome 27"/>
</dbReference>
<dbReference type="Bgee" id="ENSBTAG00000053889">
    <property type="expression patterns" value="Expressed in anterior segment of eyeball and 72 other cell types or tissues"/>
</dbReference>
<dbReference type="GO" id="GO:0005615">
    <property type="term" value="C:extracellular space"/>
    <property type="evidence" value="ECO:0000318"/>
    <property type="project" value="GO_Central"/>
</dbReference>
<dbReference type="GO" id="GO:0031731">
    <property type="term" value="F:CCR6 chemokine receptor binding"/>
    <property type="evidence" value="ECO:0000318"/>
    <property type="project" value="GO_Central"/>
</dbReference>
<dbReference type="GO" id="GO:0042056">
    <property type="term" value="F:chemoattractant activity"/>
    <property type="evidence" value="ECO:0000318"/>
    <property type="project" value="GO_Central"/>
</dbReference>
<dbReference type="GO" id="GO:0060326">
    <property type="term" value="P:cell chemotaxis"/>
    <property type="evidence" value="ECO:0000318"/>
    <property type="project" value="GO_Central"/>
</dbReference>
<dbReference type="GO" id="GO:0042742">
    <property type="term" value="P:defense response to bacterium"/>
    <property type="evidence" value="ECO:0000318"/>
    <property type="project" value="GO_Central"/>
</dbReference>
<dbReference type="GO" id="GO:0050832">
    <property type="term" value="P:defense response to fungus"/>
    <property type="evidence" value="ECO:0007669"/>
    <property type="project" value="UniProtKB-KW"/>
</dbReference>
<dbReference type="GO" id="GO:0031640">
    <property type="term" value="P:killing of cells of another organism"/>
    <property type="evidence" value="ECO:0007669"/>
    <property type="project" value="UniProtKB-KW"/>
</dbReference>
<dbReference type="FunFam" id="3.10.360.10:FF:000001">
    <property type="entry name" value="Beta-defensin 1"/>
    <property type="match status" value="1"/>
</dbReference>
<dbReference type="Gene3D" id="3.10.360.10">
    <property type="entry name" value="Antimicrobial Peptide, Beta-defensin 2, Chain A"/>
    <property type="match status" value="1"/>
</dbReference>
<dbReference type="InterPro" id="IPR006080">
    <property type="entry name" value="Beta/alpha-defensin_C"/>
</dbReference>
<dbReference type="InterPro" id="IPR001855">
    <property type="entry name" value="Defensin_beta-like"/>
</dbReference>
<dbReference type="PANTHER" id="PTHR20515">
    <property type="entry name" value="BETA-DEFENSIN"/>
    <property type="match status" value="1"/>
</dbReference>
<dbReference type="PANTHER" id="PTHR20515:SF2">
    <property type="entry name" value="DEFENSIN BETA 4A"/>
    <property type="match status" value="1"/>
</dbReference>
<dbReference type="Pfam" id="PF00711">
    <property type="entry name" value="Defensin_beta"/>
    <property type="match status" value="1"/>
</dbReference>
<dbReference type="SMART" id="SM00048">
    <property type="entry name" value="DEFSN"/>
    <property type="match status" value="1"/>
</dbReference>
<dbReference type="SUPFAM" id="SSF57392">
    <property type="entry name" value="Defensin-like"/>
    <property type="match status" value="1"/>
</dbReference>
<name>LAP_BOVIN</name>